<dbReference type="EMBL" id="KX289884">
    <property type="protein sequence ID" value="APX52861.1"/>
    <property type="molecule type" value="mRNA"/>
</dbReference>
<dbReference type="ConoServer" id="9763">
    <property type="toxin name" value="Contryphan-Mo precursor"/>
</dbReference>
<dbReference type="GO" id="GO:0005576">
    <property type="term" value="C:extracellular region"/>
    <property type="evidence" value="ECO:0007669"/>
    <property type="project" value="UniProtKB-SubCell"/>
</dbReference>
<dbReference type="GO" id="GO:0099106">
    <property type="term" value="F:ion channel regulator activity"/>
    <property type="evidence" value="ECO:0007669"/>
    <property type="project" value="UniProtKB-KW"/>
</dbReference>
<dbReference type="GO" id="GO:0090729">
    <property type="term" value="F:toxin activity"/>
    <property type="evidence" value="ECO:0007669"/>
    <property type="project" value="UniProtKB-KW"/>
</dbReference>
<dbReference type="InterPro" id="IPR011062">
    <property type="entry name" value="Contryphan_CS"/>
</dbReference>
<dbReference type="PROSITE" id="PS60027">
    <property type="entry name" value="CONTRYPHAN"/>
    <property type="match status" value="1"/>
</dbReference>
<keyword id="KW-0027">Amidation</keyword>
<keyword id="KW-0208">D-amino acid</keyword>
<keyword id="KW-1015">Disulfide bond</keyword>
<keyword id="KW-0379">Hydroxylation</keyword>
<keyword id="KW-0872">Ion channel impairing toxin</keyword>
<keyword id="KW-0528">Neurotoxin</keyword>
<keyword id="KW-0964">Secreted</keyword>
<keyword id="KW-0732">Signal</keyword>
<keyword id="KW-0800">Toxin</keyword>
<comment type="function">
    <text evidence="1 2 5 6">Its target is unknown, but this toxin may modulate voltage-activated calcium channels (Cav) or calcium-dependent potassium channels (KCa).</text>
</comment>
<comment type="subcellular location">
    <subcellularLocation>
        <location evidence="9">Secreted</location>
    </subcellularLocation>
</comment>
<comment type="tissue specificity">
    <text evidence="9">Expressed by the venom duct.</text>
</comment>
<comment type="domain">
    <text evidence="8">The cysteine framework is C-C.</text>
</comment>
<comment type="miscellaneous">
    <text evidence="4">Exists in two forms, due to cis-trans isomerization at 3-Cys-hydroxyPro-4. The cis conformation is the major form.</text>
</comment>
<comment type="similarity">
    <text evidence="8">Belongs to the O2 superfamily. Contryphan family.</text>
</comment>
<reference key="1">
    <citation type="journal article" date="2017" name="J. Proteome Res.">
        <title>Contryphan genes and mature peptides in the venom of nine cone snail species by transcriptomic and mass spectrometric analysis.</title>
        <authorList>
            <person name="Vijayasarathy M."/>
            <person name="Basheer S.M."/>
            <person name="Franklin J.B."/>
            <person name="Balaram P."/>
        </authorList>
    </citation>
    <scope>NUCLEOTIDE SEQUENCE [MRNA]</scope>
    <source>
        <tissue>Venom duct</tissue>
    </source>
</reference>
<name>COW_CONMO</name>
<accession>A0A1P8NVU1</accession>
<organism>
    <name type="scientific">Conus monile</name>
    <name type="common">Necklace cone</name>
    <dbReference type="NCBI Taxonomy" id="351660"/>
    <lineage>
        <taxon>Eukaryota</taxon>
        <taxon>Metazoa</taxon>
        <taxon>Spiralia</taxon>
        <taxon>Lophotrochozoa</taxon>
        <taxon>Mollusca</taxon>
        <taxon>Gastropoda</taxon>
        <taxon>Caenogastropoda</taxon>
        <taxon>Neogastropoda</taxon>
        <taxon>Conoidea</taxon>
        <taxon>Conidae</taxon>
        <taxon>Conus</taxon>
        <taxon>Strategoconus</taxon>
    </lineage>
</organism>
<proteinExistence type="evidence at transcript level"/>
<protein>
    <recommendedName>
        <fullName evidence="8">Contryphan-Mo</fullName>
    </recommendedName>
</protein>
<evidence type="ECO:0000250" key="1">
    <source>
        <dbReference type="UniProtKB" id="P0C248"/>
    </source>
</evidence>
<evidence type="ECO:0000250" key="2">
    <source>
        <dbReference type="UniProtKB" id="P0C250"/>
    </source>
</evidence>
<evidence type="ECO:0000250" key="3">
    <source>
        <dbReference type="UniProtKB" id="P58786"/>
    </source>
</evidence>
<evidence type="ECO:0000250" key="4">
    <source>
        <dbReference type="UniProtKB" id="P58787"/>
    </source>
</evidence>
<evidence type="ECO:0000250" key="5">
    <source>
        <dbReference type="UniProtKB" id="P62903"/>
    </source>
</evidence>
<evidence type="ECO:0000250" key="6">
    <source>
        <dbReference type="UniProtKB" id="P83047"/>
    </source>
</evidence>
<evidence type="ECO:0000256" key="7">
    <source>
        <dbReference type="SAM" id="MobiDB-lite"/>
    </source>
</evidence>
<evidence type="ECO:0000305" key="8"/>
<evidence type="ECO:0000305" key="9">
    <source>
    </source>
</evidence>
<evidence type="ECO:0000312" key="10">
    <source>
        <dbReference type="EMBL" id="APX52861.1"/>
    </source>
</evidence>
<feature type="signal peptide" evidence="8">
    <location>
        <begin position="1" status="less than"/>
        <end position="1"/>
    </location>
</feature>
<feature type="propeptide" id="PRO_0000445136" evidence="8">
    <location>
        <begin position="2"/>
        <end position="31"/>
    </location>
</feature>
<feature type="peptide" id="PRO_0000445137" description="Contryphan-Mo" evidence="8">
    <location>
        <begin position="32"/>
        <end position="41"/>
    </location>
</feature>
<feature type="region of interest" description="Disordered" evidence="7">
    <location>
        <begin position="1"/>
        <end position="24"/>
    </location>
</feature>
<feature type="modified residue" description="4-hydroxyproline" evidence="3">
    <location>
        <position position="36"/>
    </location>
</feature>
<feature type="modified residue" description="D-tryptophan" evidence="3">
    <location>
        <position position="37"/>
    </location>
</feature>
<feature type="modified residue" description="Cysteine amide" evidence="3">
    <location>
        <position position="41"/>
    </location>
</feature>
<feature type="disulfide bond" evidence="3">
    <location>
        <begin position="35"/>
        <end position="41"/>
    </location>
</feature>
<feature type="non-terminal residue" evidence="10">
    <location>
        <position position="1"/>
    </location>
</feature>
<sequence length="42" mass="4890">QGDRDQPADRNAVPRDVNPGRARRKLMKVLRESECPWKPWCG</sequence>